<organism>
    <name type="scientific">Dechloromonas aromatica (strain RCB)</name>
    <dbReference type="NCBI Taxonomy" id="159087"/>
    <lineage>
        <taxon>Bacteria</taxon>
        <taxon>Pseudomonadati</taxon>
        <taxon>Pseudomonadota</taxon>
        <taxon>Betaproteobacteria</taxon>
        <taxon>Rhodocyclales</taxon>
        <taxon>Azonexaceae</taxon>
        <taxon>Dechloromonas</taxon>
    </lineage>
</organism>
<keyword id="KW-0067">ATP-binding</keyword>
<keyword id="KW-0963">Cytoplasm</keyword>
<keyword id="KW-0275">Fatty acid biosynthesis</keyword>
<keyword id="KW-0276">Fatty acid metabolism</keyword>
<keyword id="KW-0444">Lipid biosynthesis</keyword>
<keyword id="KW-0443">Lipid metabolism</keyword>
<keyword id="KW-0479">Metal-binding</keyword>
<keyword id="KW-0547">Nucleotide-binding</keyword>
<keyword id="KW-0808">Transferase</keyword>
<keyword id="KW-0862">Zinc</keyword>
<keyword id="KW-0863">Zinc-finger</keyword>
<accession>Q47HQ3</accession>
<sequence length="289" mass="31499">MSWLTKLLPPKIKREQGPQRRGNLPEGLWSKCPSCEAVLYATDLENNLQVCPKCGHHNRLNSRQRLDLLLDSEGRFEIGAEVLPVDSLKFKDSKKYPDRLMEANESTGESDSLVVLQGAIKTMPVVAAAFEFDFMGGSMGSVLGERFVRGVQAAVEQKMPFICITASGGARMQEGLFSLMQMAKTTAALTKLSAAGLPFISILTDPTMGGVSASFAFVGDVVIAEPKALIGFAGPRVIEQTVRETLPEGFQRSEFLLEKGAIDMIVDRRELRDQVARVLALLQKLPAAA</sequence>
<dbReference type="EC" id="2.1.3.15" evidence="1"/>
<dbReference type="EMBL" id="CP000089">
    <property type="protein sequence ID" value="AAZ45628.1"/>
    <property type="molecule type" value="Genomic_DNA"/>
</dbReference>
<dbReference type="SMR" id="Q47HQ3"/>
<dbReference type="STRING" id="159087.Daro_0872"/>
<dbReference type="KEGG" id="dar:Daro_0872"/>
<dbReference type="eggNOG" id="COG0777">
    <property type="taxonomic scope" value="Bacteria"/>
</dbReference>
<dbReference type="HOGENOM" id="CLU_015486_1_0_4"/>
<dbReference type="OrthoDB" id="9772975at2"/>
<dbReference type="UniPathway" id="UPA00655">
    <property type="reaction ID" value="UER00711"/>
</dbReference>
<dbReference type="GO" id="GO:0009329">
    <property type="term" value="C:acetate CoA-transferase complex"/>
    <property type="evidence" value="ECO:0007669"/>
    <property type="project" value="TreeGrafter"/>
</dbReference>
<dbReference type="GO" id="GO:0003989">
    <property type="term" value="F:acetyl-CoA carboxylase activity"/>
    <property type="evidence" value="ECO:0007669"/>
    <property type="project" value="InterPro"/>
</dbReference>
<dbReference type="GO" id="GO:0005524">
    <property type="term" value="F:ATP binding"/>
    <property type="evidence" value="ECO:0007669"/>
    <property type="project" value="UniProtKB-KW"/>
</dbReference>
<dbReference type="GO" id="GO:0016743">
    <property type="term" value="F:carboxyl- or carbamoyltransferase activity"/>
    <property type="evidence" value="ECO:0007669"/>
    <property type="project" value="UniProtKB-UniRule"/>
</dbReference>
<dbReference type="GO" id="GO:0008270">
    <property type="term" value="F:zinc ion binding"/>
    <property type="evidence" value="ECO:0007669"/>
    <property type="project" value="UniProtKB-UniRule"/>
</dbReference>
<dbReference type="GO" id="GO:0006633">
    <property type="term" value="P:fatty acid biosynthetic process"/>
    <property type="evidence" value="ECO:0007669"/>
    <property type="project" value="UniProtKB-KW"/>
</dbReference>
<dbReference type="GO" id="GO:2001295">
    <property type="term" value="P:malonyl-CoA biosynthetic process"/>
    <property type="evidence" value="ECO:0007669"/>
    <property type="project" value="UniProtKB-UniRule"/>
</dbReference>
<dbReference type="Gene3D" id="3.90.226.10">
    <property type="entry name" value="2-enoyl-CoA Hydratase, Chain A, domain 1"/>
    <property type="match status" value="1"/>
</dbReference>
<dbReference type="HAMAP" id="MF_01395">
    <property type="entry name" value="AcetylCoA_CT_beta"/>
    <property type="match status" value="1"/>
</dbReference>
<dbReference type="InterPro" id="IPR034733">
    <property type="entry name" value="AcCoA_carboxyl_beta"/>
</dbReference>
<dbReference type="InterPro" id="IPR000438">
    <property type="entry name" value="Acetyl_CoA_COase_Trfase_b_su"/>
</dbReference>
<dbReference type="InterPro" id="IPR029045">
    <property type="entry name" value="ClpP/crotonase-like_dom_sf"/>
</dbReference>
<dbReference type="InterPro" id="IPR011762">
    <property type="entry name" value="COA_CT_N"/>
</dbReference>
<dbReference type="InterPro" id="IPR041010">
    <property type="entry name" value="Znf-ACC"/>
</dbReference>
<dbReference type="NCBIfam" id="TIGR00515">
    <property type="entry name" value="accD"/>
    <property type="match status" value="1"/>
</dbReference>
<dbReference type="PANTHER" id="PTHR42995">
    <property type="entry name" value="ACETYL-COENZYME A CARBOXYLASE CARBOXYL TRANSFERASE SUBUNIT BETA, CHLOROPLASTIC"/>
    <property type="match status" value="1"/>
</dbReference>
<dbReference type="PANTHER" id="PTHR42995:SF5">
    <property type="entry name" value="ACETYL-COENZYME A CARBOXYLASE CARBOXYL TRANSFERASE SUBUNIT BETA, CHLOROPLASTIC"/>
    <property type="match status" value="1"/>
</dbReference>
<dbReference type="Pfam" id="PF01039">
    <property type="entry name" value="Carboxyl_trans"/>
    <property type="match status" value="1"/>
</dbReference>
<dbReference type="Pfam" id="PF17848">
    <property type="entry name" value="Zn_ribbon_ACC"/>
    <property type="match status" value="1"/>
</dbReference>
<dbReference type="PRINTS" id="PR01070">
    <property type="entry name" value="ACCCTRFRASEB"/>
</dbReference>
<dbReference type="SUPFAM" id="SSF52096">
    <property type="entry name" value="ClpP/crotonase"/>
    <property type="match status" value="1"/>
</dbReference>
<dbReference type="PROSITE" id="PS50980">
    <property type="entry name" value="COA_CT_NTER"/>
    <property type="match status" value="1"/>
</dbReference>
<comment type="function">
    <text evidence="1">Component of the acetyl coenzyme A carboxylase (ACC) complex. Biotin carboxylase (BC) catalyzes the carboxylation of biotin on its carrier protein (BCCP) and then the CO(2) group is transferred by the transcarboxylase to acetyl-CoA to form malonyl-CoA.</text>
</comment>
<comment type="catalytic activity">
    <reaction evidence="1">
        <text>N(6)-carboxybiotinyl-L-lysyl-[protein] + acetyl-CoA = N(6)-biotinyl-L-lysyl-[protein] + malonyl-CoA</text>
        <dbReference type="Rhea" id="RHEA:54728"/>
        <dbReference type="Rhea" id="RHEA-COMP:10505"/>
        <dbReference type="Rhea" id="RHEA-COMP:10506"/>
        <dbReference type="ChEBI" id="CHEBI:57288"/>
        <dbReference type="ChEBI" id="CHEBI:57384"/>
        <dbReference type="ChEBI" id="CHEBI:83144"/>
        <dbReference type="ChEBI" id="CHEBI:83145"/>
        <dbReference type="EC" id="2.1.3.15"/>
    </reaction>
</comment>
<comment type="cofactor">
    <cofactor evidence="1">
        <name>Zn(2+)</name>
        <dbReference type="ChEBI" id="CHEBI:29105"/>
    </cofactor>
    <text evidence="1">Binds 1 zinc ion per subunit.</text>
</comment>
<comment type="pathway">
    <text evidence="1">Lipid metabolism; malonyl-CoA biosynthesis; malonyl-CoA from acetyl-CoA: step 1/1.</text>
</comment>
<comment type="subunit">
    <text evidence="1">Acetyl-CoA carboxylase is a heterohexamer composed of biotin carboxyl carrier protein (AccB), biotin carboxylase (AccC) and two subunits each of ACCase subunit alpha (AccA) and ACCase subunit beta (AccD).</text>
</comment>
<comment type="subcellular location">
    <subcellularLocation>
        <location evidence="1">Cytoplasm</location>
    </subcellularLocation>
</comment>
<comment type="similarity">
    <text evidence="1">Belongs to the AccD/PCCB family.</text>
</comment>
<protein>
    <recommendedName>
        <fullName evidence="1">Acetyl-coenzyme A carboxylase carboxyl transferase subunit beta</fullName>
        <shortName evidence="1">ACCase subunit beta</shortName>
        <shortName evidence="1">Acetyl-CoA carboxylase carboxyltransferase subunit beta</shortName>
        <ecNumber evidence="1">2.1.3.15</ecNumber>
    </recommendedName>
</protein>
<feature type="chain" id="PRO_0000358980" description="Acetyl-coenzyme A carboxylase carboxyl transferase subunit beta">
    <location>
        <begin position="1"/>
        <end position="289"/>
    </location>
</feature>
<feature type="domain" description="CoA carboxyltransferase N-terminal" evidence="2">
    <location>
        <begin position="28"/>
        <end position="289"/>
    </location>
</feature>
<feature type="zinc finger region" description="C4-type" evidence="1">
    <location>
        <begin position="32"/>
        <end position="54"/>
    </location>
</feature>
<feature type="binding site" evidence="1">
    <location>
        <position position="32"/>
    </location>
    <ligand>
        <name>Zn(2+)</name>
        <dbReference type="ChEBI" id="CHEBI:29105"/>
    </ligand>
</feature>
<feature type="binding site" evidence="1">
    <location>
        <position position="35"/>
    </location>
    <ligand>
        <name>Zn(2+)</name>
        <dbReference type="ChEBI" id="CHEBI:29105"/>
    </ligand>
</feature>
<feature type="binding site" evidence="1">
    <location>
        <position position="51"/>
    </location>
    <ligand>
        <name>Zn(2+)</name>
        <dbReference type="ChEBI" id="CHEBI:29105"/>
    </ligand>
</feature>
<feature type="binding site" evidence="1">
    <location>
        <position position="54"/>
    </location>
    <ligand>
        <name>Zn(2+)</name>
        <dbReference type="ChEBI" id="CHEBI:29105"/>
    </ligand>
</feature>
<gene>
    <name evidence="1" type="primary">accD</name>
    <name type="ordered locus">Daro_0872</name>
</gene>
<proteinExistence type="inferred from homology"/>
<reference key="1">
    <citation type="journal article" date="2009" name="BMC Genomics">
        <title>Metabolic analysis of the soil microbe Dechloromonas aromatica str. RCB: indications of a surprisingly complex life-style and cryptic anaerobic pathways for aromatic degradation.</title>
        <authorList>
            <person name="Salinero K.K."/>
            <person name="Keller K."/>
            <person name="Feil W.S."/>
            <person name="Feil H."/>
            <person name="Trong S."/>
            <person name="Di Bartolo G."/>
            <person name="Lapidus A."/>
        </authorList>
    </citation>
    <scope>NUCLEOTIDE SEQUENCE [LARGE SCALE GENOMIC DNA]</scope>
    <source>
        <strain>RCB</strain>
    </source>
</reference>
<evidence type="ECO:0000255" key="1">
    <source>
        <dbReference type="HAMAP-Rule" id="MF_01395"/>
    </source>
</evidence>
<evidence type="ECO:0000255" key="2">
    <source>
        <dbReference type="PROSITE-ProRule" id="PRU01136"/>
    </source>
</evidence>
<name>ACCD_DECAR</name>